<evidence type="ECO:0000255" key="1">
    <source>
        <dbReference type="HAMAP-Rule" id="MF_01656"/>
    </source>
</evidence>
<reference key="1">
    <citation type="journal article" date="2009" name="BMC Genomics">
        <title>Metabolic analysis of the soil microbe Dechloromonas aromatica str. RCB: indications of a surprisingly complex life-style and cryptic anaerobic pathways for aromatic degradation.</title>
        <authorList>
            <person name="Salinero K.K."/>
            <person name="Keller K."/>
            <person name="Feil W.S."/>
            <person name="Feil H."/>
            <person name="Trong S."/>
            <person name="Di Bartolo G."/>
            <person name="Lapidus A."/>
        </authorList>
    </citation>
    <scope>NUCLEOTIDE SEQUENCE [LARGE SCALE GENOMIC DNA]</scope>
    <source>
        <strain>RCB</strain>
    </source>
</reference>
<organism>
    <name type="scientific">Dechloromonas aromatica (strain RCB)</name>
    <dbReference type="NCBI Taxonomy" id="159087"/>
    <lineage>
        <taxon>Bacteria</taxon>
        <taxon>Pseudomonadati</taxon>
        <taxon>Pseudomonadota</taxon>
        <taxon>Betaproteobacteria</taxon>
        <taxon>Rhodocyclales</taxon>
        <taxon>Azonexaceae</taxon>
        <taxon>Dechloromonas</taxon>
    </lineage>
</organism>
<name>HOA1_DECAR</name>
<sequence>MSLRGKNVTVHDMTLRDGMHPKRHLMTLDQMVSIATGLDEAGIPLIEVTHGDGLGGSSVNYGFPAHTDEEYLGTVIPKMKNAKISALLLPGIGTVDHLKMARDLGVHTIRVATHCTEADVSEQHITMARKLDMDTVGFLMMSHMNGAEGLVKQAKLMEGYGANCIYVTDSAGHLLPEGVKERLGAVRKALKPETELGFHGHHNLAMGVANSIAAIEVGANRIDAAAAGLGAGAGNTPMEVLIAVCSLMGIETGVDVAKITDVAEDLVVPMMDFPIRIDRDALTLGYAGVYGSFLLFAKRASAKYGVPARDILVELGRRGMVGGQEDMIEDTAITMARERGLKV</sequence>
<protein>
    <recommendedName>
        <fullName evidence="1">4-hydroxy-2-oxovalerate aldolase 1</fullName>
        <shortName evidence="1">HOA 1</shortName>
        <ecNumber evidence="1">4.1.3.39</ecNumber>
    </recommendedName>
    <alternativeName>
        <fullName evidence="1">4-hydroxy-2-keto-pentanoic acid aldolase 1</fullName>
    </alternativeName>
    <alternativeName>
        <fullName evidence="1">4-hydroxy-2-oxopentanoate aldolase 1</fullName>
    </alternativeName>
</protein>
<feature type="chain" id="PRO_0000387822" description="4-hydroxy-2-oxovalerate aldolase 1">
    <location>
        <begin position="1"/>
        <end position="343"/>
    </location>
</feature>
<feature type="domain" description="Pyruvate carboxyltransferase" evidence="1">
    <location>
        <begin position="8"/>
        <end position="260"/>
    </location>
</feature>
<feature type="active site" description="Proton acceptor" evidence="1">
    <location>
        <position position="20"/>
    </location>
</feature>
<feature type="binding site" evidence="1">
    <location>
        <begin position="16"/>
        <end position="17"/>
    </location>
    <ligand>
        <name>substrate</name>
    </ligand>
</feature>
<feature type="binding site" evidence="1">
    <location>
        <position position="17"/>
    </location>
    <ligand>
        <name>Mn(2+)</name>
        <dbReference type="ChEBI" id="CHEBI:29035"/>
    </ligand>
</feature>
<feature type="binding site" evidence="1">
    <location>
        <position position="170"/>
    </location>
    <ligand>
        <name>substrate</name>
    </ligand>
</feature>
<feature type="binding site" evidence="1">
    <location>
        <position position="199"/>
    </location>
    <ligand>
        <name>Mn(2+)</name>
        <dbReference type="ChEBI" id="CHEBI:29035"/>
    </ligand>
</feature>
<feature type="binding site" evidence="1">
    <location>
        <position position="199"/>
    </location>
    <ligand>
        <name>substrate</name>
    </ligand>
</feature>
<feature type="binding site" evidence="1">
    <location>
        <position position="201"/>
    </location>
    <ligand>
        <name>Mn(2+)</name>
        <dbReference type="ChEBI" id="CHEBI:29035"/>
    </ligand>
</feature>
<feature type="binding site" evidence="1">
    <location>
        <position position="290"/>
    </location>
    <ligand>
        <name>substrate</name>
    </ligand>
</feature>
<feature type="site" description="Transition state stabilizer" evidence="1">
    <location>
        <position position="16"/>
    </location>
</feature>
<dbReference type="EC" id="4.1.3.39" evidence="1"/>
<dbReference type="EMBL" id="CP000089">
    <property type="protein sequence ID" value="AAZ45663.1"/>
    <property type="molecule type" value="Genomic_DNA"/>
</dbReference>
<dbReference type="SMR" id="Q47HL8"/>
<dbReference type="STRING" id="159087.Daro_0907"/>
<dbReference type="KEGG" id="dar:Daro_0907"/>
<dbReference type="eggNOG" id="COG0119">
    <property type="taxonomic scope" value="Bacteria"/>
</dbReference>
<dbReference type="HOGENOM" id="CLU_049173_0_0_4"/>
<dbReference type="OrthoDB" id="9803573at2"/>
<dbReference type="GO" id="GO:0003852">
    <property type="term" value="F:2-isopropylmalate synthase activity"/>
    <property type="evidence" value="ECO:0007669"/>
    <property type="project" value="TreeGrafter"/>
</dbReference>
<dbReference type="GO" id="GO:0008701">
    <property type="term" value="F:4-hydroxy-2-oxovalerate aldolase activity"/>
    <property type="evidence" value="ECO:0007669"/>
    <property type="project" value="UniProtKB-UniRule"/>
</dbReference>
<dbReference type="GO" id="GO:0030145">
    <property type="term" value="F:manganese ion binding"/>
    <property type="evidence" value="ECO:0007669"/>
    <property type="project" value="UniProtKB-UniRule"/>
</dbReference>
<dbReference type="GO" id="GO:0009056">
    <property type="term" value="P:catabolic process"/>
    <property type="evidence" value="ECO:0007669"/>
    <property type="project" value="UniProtKB-KW"/>
</dbReference>
<dbReference type="GO" id="GO:0009098">
    <property type="term" value="P:L-leucine biosynthetic process"/>
    <property type="evidence" value="ECO:0007669"/>
    <property type="project" value="TreeGrafter"/>
</dbReference>
<dbReference type="CDD" id="cd07943">
    <property type="entry name" value="DRE_TIM_HOA"/>
    <property type="match status" value="1"/>
</dbReference>
<dbReference type="Gene3D" id="1.10.8.60">
    <property type="match status" value="1"/>
</dbReference>
<dbReference type="Gene3D" id="3.20.20.70">
    <property type="entry name" value="Aldolase class I"/>
    <property type="match status" value="1"/>
</dbReference>
<dbReference type="HAMAP" id="MF_01656">
    <property type="entry name" value="HOA"/>
    <property type="match status" value="1"/>
</dbReference>
<dbReference type="InterPro" id="IPR050073">
    <property type="entry name" value="2-IPM_HCS-like"/>
</dbReference>
<dbReference type="InterPro" id="IPR017629">
    <property type="entry name" value="4OH_2_O-val_aldolase"/>
</dbReference>
<dbReference type="InterPro" id="IPR013785">
    <property type="entry name" value="Aldolase_TIM"/>
</dbReference>
<dbReference type="InterPro" id="IPR012425">
    <property type="entry name" value="DmpG_comm"/>
</dbReference>
<dbReference type="InterPro" id="IPR035685">
    <property type="entry name" value="DRE_TIM_HOA"/>
</dbReference>
<dbReference type="InterPro" id="IPR000891">
    <property type="entry name" value="PYR_CT"/>
</dbReference>
<dbReference type="NCBIfam" id="TIGR03217">
    <property type="entry name" value="4OH_2_O_val_ald"/>
    <property type="match status" value="1"/>
</dbReference>
<dbReference type="NCBIfam" id="NF006049">
    <property type="entry name" value="PRK08195.1"/>
    <property type="match status" value="1"/>
</dbReference>
<dbReference type="PANTHER" id="PTHR10277:SF9">
    <property type="entry name" value="2-ISOPROPYLMALATE SYNTHASE 1, CHLOROPLASTIC-RELATED"/>
    <property type="match status" value="1"/>
</dbReference>
<dbReference type="PANTHER" id="PTHR10277">
    <property type="entry name" value="HOMOCITRATE SYNTHASE-RELATED"/>
    <property type="match status" value="1"/>
</dbReference>
<dbReference type="Pfam" id="PF07836">
    <property type="entry name" value="DmpG_comm"/>
    <property type="match status" value="1"/>
</dbReference>
<dbReference type="Pfam" id="PF00682">
    <property type="entry name" value="HMGL-like"/>
    <property type="match status" value="1"/>
</dbReference>
<dbReference type="SUPFAM" id="SSF51569">
    <property type="entry name" value="Aldolase"/>
    <property type="match status" value="1"/>
</dbReference>
<dbReference type="SUPFAM" id="SSF89000">
    <property type="entry name" value="post-HMGL domain-like"/>
    <property type="match status" value="1"/>
</dbReference>
<dbReference type="PROSITE" id="PS50991">
    <property type="entry name" value="PYR_CT"/>
    <property type="match status" value="1"/>
</dbReference>
<gene>
    <name type="ordered locus">Daro_0907</name>
</gene>
<keyword id="KW-0058">Aromatic hydrocarbons catabolism</keyword>
<keyword id="KW-0456">Lyase</keyword>
<keyword id="KW-0464">Manganese</keyword>
<keyword id="KW-0479">Metal-binding</keyword>
<comment type="catalytic activity">
    <reaction evidence="1">
        <text>(S)-4-hydroxy-2-oxopentanoate = acetaldehyde + pyruvate</text>
        <dbReference type="Rhea" id="RHEA:22624"/>
        <dbReference type="ChEBI" id="CHEBI:15343"/>
        <dbReference type="ChEBI" id="CHEBI:15361"/>
        <dbReference type="ChEBI" id="CHEBI:73143"/>
        <dbReference type="EC" id="4.1.3.39"/>
    </reaction>
</comment>
<comment type="similarity">
    <text evidence="1">Belongs to the 4-hydroxy-2-oxovalerate aldolase family.</text>
</comment>
<accession>Q47HL8</accession>
<proteinExistence type="inferred from homology"/>